<name>RL2_AZOPC</name>
<proteinExistence type="inferred from homology"/>
<keyword id="KW-1185">Reference proteome</keyword>
<keyword id="KW-0687">Ribonucleoprotein</keyword>
<keyword id="KW-0689">Ribosomal protein</keyword>
<keyword id="KW-0694">RNA-binding</keyword>
<keyword id="KW-0699">rRNA-binding</keyword>
<sequence>MGIRKLKPVTPGQRHRIVGMFSEITATIPEKSLVFGKCKSGGRNAEGHRTVRHIGGGHKRRFRLIDFKRNKDGIPARVKSIEYDPNRSARIALLYYADGEKVYIVAPNGLKVNQLIVSGKEAPPEVGNSLPLADIPLGTIIHNIELRPGQGAKMVRSAGVFAQVVSREGNYVIVRMPSGETRKVLALCRASIGSVSNSEHALEKSGKAGRIRWLGHCPHVRGVAMNPVDHPMGGGEGRASGGHPRSRKGLYAKGLKTRNLKKYSSRYIIESKKK</sequence>
<comment type="function">
    <text evidence="1">One of the primary rRNA binding proteins. Required for association of the 30S and 50S subunits to form the 70S ribosome, for tRNA binding and peptide bond formation. It has been suggested to have peptidyltransferase activity; this is somewhat controversial. Makes several contacts with the 16S rRNA in the 70S ribosome.</text>
</comment>
<comment type="subunit">
    <text evidence="1">Part of the 50S ribosomal subunit. Forms a bridge to the 30S subunit in the 70S ribosome.</text>
</comment>
<comment type="similarity">
    <text evidence="1">Belongs to the universal ribosomal protein uL2 family.</text>
</comment>
<accession>B6YQ82</accession>
<feature type="chain" id="PRO_1000141502" description="Large ribosomal subunit protein uL2">
    <location>
        <begin position="1"/>
        <end position="274"/>
    </location>
</feature>
<feature type="region of interest" description="Disordered" evidence="2">
    <location>
        <begin position="228"/>
        <end position="254"/>
    </location>
</feature>
<feature type="compositionally biased region" description="Basic residues" evidence="2">
    <location>
        <begin position="244"/>
        <end position="254"/>
    </location>
</feature>
<reference key="1">
    <citation type="journal article" date="2008" name="Science">
        <title>Genome of an endosymbiont coupling N2 fixation to cellulolysis within RT protist cells in termite gut.</title>
        <authorList>
            <person name="Hongoh Y."/>
            <person name="Sharma V.K."/>
            <person name="Prakash T."/>
            <person name="Noda S."/>
            <person name="Toh H."/>
            <person name="Taylor T.D."/>
            <person name="Kudo T."/>
            <person name="Sakaki Y."/>
            <person name="Toyoda A."/>
            <person name="Hattori M."/>
            <person name="Ohkuma M."/>
        </authorList>
    </citation>
    <scope>NUCLEOTIDE SEQUENCE [LARGE SCALE GENOMIC DNA]</scope>
</reference>
<organism>
    <name type="scientific">Azobacteroides pseudotrichonymphae genomovar. CFP2</name>
    <dbReference type="NCBI Taxonomy" id="511995"/>
    <lineage>
        <taxon>Bacteria</taxon>
        <taxon>Pseudomonadati</taxon>
        <taxon>Bacteroidota</taxon>
        <taxon>Bacteroidia</taxon>
        <taxon>Bacteroidales</taxon>
        <taxon>Candidatus Azobacteroides</taxon>
    </lineage>
</organism>
<dbReference type="EMBL" id="AP010656">
    <property type="protein sequence ID" value="BAG83354.1"/>
    <property type="molecule type" value="Genomic_DNA"/>
</dbReference>
<dbReference type="RefSeq" id="WP_012573115.1">
    <property type="nucleotide sequence ID" value="NC_011565.1"/>
</dbReference>
<dbReference type="SMR" id="B6YQ82"/>
<dbReference type="STRING" id="511995.CFPG_091"/>
<dbReference type="KEGG" id="aps:CFPG_091"/>
<dbReference type="eggNOG" id="COG0090">
    <property type="taxonomic scope" value="Bacteria"/>
</dbReference>
<dbReference type="HOGENOM" id="CLU_036235_2_1_10"/>
<dbReference type="OrthoDB" id="9778722at2"/>
<dbReference type="Proteomes" id="UP000000723">
    <property type="component" value="Chromosome"/>
</dbReference>
<dbReference type="GO" id="GO:0015934">
    <property type="term" value="C:large ribosomal subunit"/>
    <property type="evidence" value="ECO:0007669"/>
    <property type="project" value="InterPro"/>
</dbReference>
<dbReference type="GO" id="GO:0019843">
    <property type="term" value="F:rRNA binding"/>
    <property type="evidence" value="ECO:0007669"/>
    <property type="project" value="UniProtKB-UniRule"/>
</dbReference>
<dbReference type="GO" id="GO:0003735">
    <property type="term" value="F:structural constituent of ribosome"/>
    <property type="evidence" value="ECO:0007669"/>
    <property type="project" value="InterPro"/>
</dbReference>
<dbReference type="GO" id="GO:0016740">
    <property type="term" value="F:transferase activity"/>
    <property type="evidence" value="ECO:0007669"/>
    <property type="project" value="InterPro"/>
</dbReference>
<dbReference type="GO" id="GO:0002181">
    <property type="term" value="P:cytoplasmic translation"/>
    <property type="evidence" value="ECO:0007669"/>
    <property type="project" value="TreeGrafter"/>
</dbReference>
<dbReference type="FunFam" id="2.30.30.30:FF:000001">
    <property type="entry name" value="50S ribosomal protein L2"/>
    <property type="match status" value="1"/>
</dbReference>
<dbReference type="FunFam" id="2.40.50.140:FF:000003">
    <property type="entry name" value="50S ribosomal protein L2"/>
    <property type="match status" value="1"/>
</dbReference>
<dbReference type="FunFam" id="4.10.950.10:FF:000001">
    <property type="entry name" value="50S ribosomal protein L2"/>
    <property type="match status" value="1"/>
</dbReference>
<dbReference type="Gene3D" id="2.30.30.30">
    <property type="match status" value="1"/>
</dbReference>
<dbReference type="Gene3D" id="2.40.50.140">
    <property type="entry name" value="Nucleic acid-binding proteins"/>
    <property type="match status" value="1"/>
</dbReference>
<dbReference type="Gene3D" id="4.10.950.10">
    <property type="entry name" value="Ribosomal protein L2, domain 3"/>
    <property type="match status" value="1"/>
</dbReference>
<dbReference type="HAMAP" id="MF_01320_B">
    <property type="entry name" value="Ribosomal_uL2_B"/>
    <property type="match status" value="1"/>
</dbReference>
<dbReference type="InterPro" id="IPR012340">
    <property type="entry name" value="NA-bd_OB-fold"/>
</dbReference>
<dbReference type="InterPro" id="IPR014722">
    <property type="entry name" value="Rib_uL2_dom2"/>
</dbReference>
<dbReference type="InterPro" id="IPR002171">
    <property type="entry name" value="Ribosomal_uL2"/>
</dbReference>
<dbReference type="InterPro" id="IPR005880">
    <property type="entry name" value="Ribosomal_uL2_bac/org-type"/>
</dbReference>
<dbReference type="InterPro" id="IPR022669">
    <property type="entry name" value="Ribosomal_uL2_C"/>
</dbReference>
<dbReference type="InterPro" id="IPR022671">
    <property type="entry name" value="Ribosomal_uL2_CS"/>
</dbReference>
<dbReference type="InterPro" id="IPR014726">
    <property type="entry name" value="Ribosomal_uL2_dom3"/>
</dbReference>
<dbReference type="InterPro" id="IPR022666">
    <property type="entry name" value="Ribosomal_uL2_RNA-bd_dom"/>
</dbReference>
<dbReference type="InterPro" id="IPR008991">
    <property type="entry name" value="Translation_prot_SH3-like_sf"/>
</dbReference>
<dbReference type="NCBIfam" id="TIGR01171">
    <property type="entry name" value="rplB_bact"/>
    <property type="match status" value="1"/>
</dbReference>
<dbReference type="PANTHER" id="PTHR13691:SF5">
    <property type="entry name" value="LARGE RIBOSOMAL SUBUNIT PROTEIN UL2M"/>
    <property type="match status" value="1"/>
</dbReference>
<dbReference type="PANTHER" id="PTHR13691">
    <property type="entry name" value="RIBOSOMAL PROTEIN L2"/>
    <property type="match status" value="1"/>
</dbReference>
<dbReference type="Pfam" id="PF00181">
    <property type="entry name" value="Ribosomal_L2"/>
    <property type="match status" value="1"/>
</dbReference>
<dbReference type="Pfam" id="PF03947">
    <property type="entry name" value="Ribosomal_L2_C"/>
    <property type="match status" value="1"/>
</dbReference>
<dbReference type="PIRSF" id="PIRSF002158">
    <property type="entry name" value="Ribosomal_L2"/>
    <property type="match status" value="1"/>
</dbReference>
<dbReference type="SMART" id="SM01383">
    <property type="entry name" value="Ribosomal_L2"/>
    <property type="match status" value="1"/>
</dbReference>
<dbReference type="SMART" id="SM01382">
    <property type="entry name" value="Ribosomal_L2_C"/>
    <property type="match status" value="1"/>
</dbReference>
<dbReference type="SUPFAM" id="SSF50249">
    <property type="entry name" value="Nucleic acid-binding proteins"/>
    <property type="match status" value="1"/>
</dbReference>
<dbReference type="SUPFAM" id="SSF50104">
    <property type="entry name" value="Translation proteins SH3-like domain"/>
    <property type="match status" value="1"/>
</dbReference>
<dbReference type="PROSITE" id="PS00467">
    <property type="entry name" value="RIBOSOMAL_L2"/>
    <property type="match status" value="1"/>
</dbReference>
<gene>
    <name evidence="1" type="primary">rplB</name>
    <name type="ordered locus">CFPG_091</name>
</gene>
<evidence type="ECO:0000255" key="1">
    <source>
        <dbReference type="HAMAP-Rule" id="MF_01320"/>
    </source>
</evidence>
<evidence type="ECO:0000256" key="2">
    <source>
        <dbReference type="SAM" id="MobiDB-lite"/>
    </source>
</evidence>
<evidence type="ECO:0000305" key="3"/>
<protein>
    <recommendedName>
        <fullName evidence="1">Large ribosomal subunit protein uL2</fullName>
    </recommendedName>
    <alternativeName>
        <fullName evidence="3">50S ribosomal protein L2</fullName>
    </alternativeName>
</protein>